<reference key="1">
    <citation type="journal article" date="2011" name="J. Bacteriol.">
        <title>Comparative genomics of 28 Salmonella enterica isolates: evidence for CRISPR-mediated adaptive sublineage evolution.</title>
        <authorList>
            <person name="Fricke W.F."/>
            <person name="Mammel M.K."/>
            <person name="McDermott P.F."/>
            <person name="Tartera C."/>
            <person name="White D.G."/>
            <person name="Leclerc J.E."/>
            <person name="Ravel J."/>
            <person name="Cebula T.A."/>
        </authorList>
    </citation>
    <scope>NUCLEOTIDE SEQUENCE [LARGE SCALE GENOMIC DNA]</scope>
    <source>
        <strain>CVM19633</strain>
    </source>
</reference>
<protein>
    <recommendedName>
        <fullName evidence="1">Probable L-ascorbate-6-phosphate lactonase UlaG</fullName>
        <ecNumber evidence="1">3.1.1.-</ecNumber>
    </recommendedName>
    <alternativeName>
        <fullName evidence="1">L-ascorbate utilization protein G</fullName>
    </alternativeName>
</protein>
<gene>
    <name evidence="1" type="primary">ulaG</name>
    <name type="ordered locus">SeSA_A4650</name>
</gene>
<comment type="function">
    <text evidence="1">Probably catalyzes the hydrolysis of L-ascorbate-6-P into 3-keto-L-gulonate-6-P. Is essential for L-ascorbate utilization under anaerobic conditions.</text>
</comment>
<comment type="catalytic activity">
    <reaction evidence="1">
        <text>L-ascorbate 6-phosphate + H2O = 3-dehydro-L-gulonate 6-phosphate</text>
        <dbReference type="Rhea" id="RHEA:28803"/>
        <dbReference type="ChEBI" id="CHEBI:15377"/>
        <dbReference type="ChEBI" id="CHEBI:58774"/>
        <dbReference type="ChEBI" id="CHEBI:61698"/>
    </reaction>
</comment>
<comment type="cofactor">
    <cofactor evidence="1">
        <name>a divalent metal cation</name>
        <dbReference type="ChEBI" id="CHEBI:60240"/>
    </cofactor>
</comment>
<comment type="pathway">
    <text evidence="1">Cofactor degradation; L-ascorbate degradation; D-xylulose 5-phosphate from L-ascorbate: step 1/4.</text>
</comment>
<comment type="subcellular location">
    <subcellularLocation>
        <location evidence="1">Cytoplasm</location>
    </subcellularLocation>
</comment>
<comment type="induction">
    <text evidence="1">Induced by L-ascorbate. Repressed by UlaR.</text>
</comment>
<comment type="similarity">
    <text evidence="1">Belongs to the UlaG family.</text>
</comment>
<organism>
    <name type="scientific">Salmonella schwarzengrund (strain CVM19633)</name>
    <dbReference type="NCBI Taxonomy" id="439843"/>
    <lineage>
        <taxon>Bacteria</taxon>
        <taxon>Pseudomonadati</taxon>
        <taxon>Pseudomonadota</taxon>
        <taxon>Gammaproteobacteria</taxon>
        <taxon>Enterobacterales</taxon>
        <taxon>Enterobacteriaceae</taxon>
        <taxon>Salmonella</taxon>
    </lineage>
</organism>
<evidence type="ECO:0000255" key="1">
    <source>
        <dbReference type="HAMAP-Rule" id="MF_01266"/>
    </source>
</evidence>
<feature type="chain" id="PRO_1000140107" description="Probable L-ascorbate-6-phosphate lactonase UlaG">
    <location>
        <begin position="1"/>
        <end position="354"/>
    </location>
</feature>
<dbReference type="EC" id="3.1.1.-" evidence="1"/>
<dbReference type="EMBL" id="CP001127">
    <property type="protein sequence ID" value="ACF91561.1"/>
    <property type="molecule type" value="Genomic_DNA"/>
</dbReference>
<dbReference type="RefSeq" id="WP_000049161.1">
    <property type="nucleotide sequence ID" value="NC_011094.1"/>
</dbReference>
<dbReference type="SMR" id="B4TSH2"/>
<dbReference type="GeneID" id="66758606"/>
<dbReference type="KEGG" id="sew:SeSA_A4650"/>
<dbReference type="HOGENOM" id="CLU_074775_0_0_6"/>
<dbReference type="UniPathway" id="UPA00263">
    <property type="reaction ID" value="UER00377"/>
</dbReference>
<dbReference type="Proteomes" id="UP000001865">
    <property type="component" value="Chromosome"/>
</dbReference>
<dbReference type="GO" id="GO:0005737">
    <property type="term" value="C:cytoplasm"/>
    <property type="evidence" value="ECO:0007669"/>
    <property type="project" value="UniProtKB-SubCell"/>
</dbReference>
<dbReference type="GO" id="GO:0035460">
    <property type="term" value="F:L-ascorbate 6-phosphate lactonase activity"/>
    <property type="evidence" value="ECO:0007669"/>
    <property type="project" value="InterPro"/>
</dbReference>
<dbReference type="GO" id="GO:0030145">
    <property type="term" value="F:manganese ion binding"/>
    <property type="evidence" value="ECO:0007669"/>
    <property type="project" value="InterPro"/>
</dbReference>
<dbReference type="GO" id="GO:0019854">
    <property type="term" value="P:L-ascorbic acid catabolic process"/>
    <property type="evidence" value="ECO:0007669"/>
    <property type="project" value="UniProtKB-UniRule"/>
</dbReference>
<dbReference type="CDD" id="cd16284">
    <property type="entry name" value="UlaG-like_MBL-fold"/>
    <property type="match status" value="1"/>
</dbReference>
<dbReference type="FunFam" id="3.60.15.10:FF:000004">
    <property type="entry name" value="Probable L-ascorbate-6-phosphate lactonase UlaG"/>
    <property type="match status" value="1"/>
</dbReference>
<dbReference type="Gene3D" id="3.60.15.10">
    <property type="entry name" value="Ribonuclease Z/Hydroxyacylglutathione hydrolase-like"/>
    <property type="match status" value="1"/>
</dbReference>
<dbReference type="HAMAP" id="MF_01266">
    <property type="entry name" value="UlaG"/>
    <property type="match status" value="1"/>
</dbReference>
<dbReference type="InterPro" id="IPR023951">
    <property type="entry name" value="L-ascorbate_6P_UlaG"/>
</dbReference>
<dbReference type="InterPro" id="IPR001279">
    <property type="entry name" value="Metallo-B-lactamas"/>
</dbReference>
<dbReference type="InterPro" id="IPR036866">
    <property type="entry name" value="RibonucZ/Hydroxyglut_hydro"/>
</dbReference>
<dbReference type="InterPro" id="IPR048021">
    <property type="entry name" value="UlaG-like_MBL-fold"/>
</dbReference>
<dbReference type="InterPro" id="IPR050114">
    <property type="entry name" value="UPF0173_UPF0282_UlaG_hydrolase"/>
</dbReference>
<dbReference type="NCBIfam" id="NF008688">
    <property type="entry name" value="PRK11709.1"/>
    <property type="match status" value="1"/>
</dbReference>
<dbReference type="PANTHER" id="PTHR43546:SF9">
    <property type="entry name" value="L-ASCORBATE-6-PHOSPHATE LACTONASE ULAG-RELATED"/>
    <property type="match status" value="1"/>
</dbReference>
<dbReference type="PANTHER" id="PTHR43546">
    <property type="entry name" value="UPF0173 METAL-DEPENDENT HYDROLASE MJ1163-RELATED"/>
    <property type="match status" value="1"/>
</dbReference>
<dbReference type="Pfam" id="PF12706">
    <property type="entry name" value="Lactamase_B_2"/>
    <property type="match status" value="1"/>
</dbReference>
<dbReference type="SUPFAM" id="SSF56281">
    <property type="entry name" value="Metallo-hydrolase/oxidoreductase"/>
    <property type="match status" value="1"/>
</dbReference>
<accession>B4TSH2</accession>
<proteinExistence type="inferred from homology"/>
<name>ULAG_SALSV</name>
<sequence>MSKVQSITRESWILSTFPEWGSWLNEEIEQEQVAPGTFAMWWLGCTGIWLKSEGGTNVCVDFWCGTGKQSHGNPLMKTGHQMQRMAGVKKLQPNLRTTPFVLDPFAIRQIDAVLATHDHNDHIDVNVAAAVMQNCADDVPFIGPQTCVDLWVGWGVPKERCIVVKPGDVVKVKDIEIHALDAFDRTALITLPADQKAAGVLPDGMDVRAVNYLFKTPGGNLYHSGDSHYSNYYAKHGNEHQIDVALGSYGENPRGITDKMTSADILRMAESLNTKVVIPFHHDIWSNFQADPQEIRVLWEMKKDRLKYGFKPFIWQVGGKFTWPLDKDNFEYHYPRGFDDCFTIEPDLPFKSFL</sequence>
<keyword id="KW-0963">Cytoplasm</keyword>
<keyword id="KW-0378">Hydrolase</keyword>